<feature type="chain" id="PRO_0000331166" description="Spermidine export protein MdtJ">
    <location>
        <begin position="1"/>
        <end position="121"/>
    </location>
</feature>
<feature type="transmembrane region" description="Helical" evidence="1">
    <location>
        <begin position="1"/>
        <end position="21"/>
    </location>
</feature>
<feature type="transmembrane region" description="Helical" evidence="1">
    <location>
        <begin position="32"/>
        <end position="52"/>
    </location>
</feature>
<feature type="transmembrane region" description="Helical" evidence="1">
    <location>
        <begin position="55"/>
        <end position="75"/>
    </location>
</feature>
<feature type="transmembrane region" description="Helical" evidence="1">
    <location>
        <begin position="82"/>
        <end position="102"/>
    </location>
</feature>
<protein>
    <recommendedName>
        <fullName evidence="1">Spermidine export protein MdtJ</fullName>
    </recommendedName>
</protein>
<name>MDTJ_ECOUT</name>
<keyword id="KW-0997">Cell inner membrane</keyword>
<keyword id="KW-1003">Cell membrane</keyword>
<keyword id="KW-0472">Membrane</keyword>
<keyword id="KW-0812">Transmembrane</keyword>
<keyword id="KW-1133">Transmembrane helix</keyword>
<keyword id="KW-0813">Transport</keyword>
<accession>Q1RBJ8</accession>
<organism>
    <name type="scientific">Escherichia coli (strain UTI89 / UPEC)</name>
    <dbReference type="NCBI Taxonomy" id="364106"/>
    <lineage>
        <taxon>Bacteria</taxon>
        <taxon>Pseudomonadati</taxon>
        <taxon>Pseudomonadota</taxon>
        <taxon>Gammaproteobacteria</taxon>
        <taxon>Enterobacterales</taxon>
        <taxon>Enterobacteriaceae</taxon>
        <taxon>Escherichia</taxon>
    </lineage>
</organism>
<sequence>MYIYWILLGLAIATEITGTLSMKWASVSEGNGGFILMLVMISLSYIFLSFAVKKIALGVAYALWEGIGILFITLFSVLLFDESLSLMKIAGLTTLVAGIVLIKSGTRKARKPELEVNHGAV</sequence>
<evidence type="ECO:0000255" key="1">
    <source>
        <dbReference type="HAMAP-Rule" id="MF_01598"/>
    </source>
</evidence>
<comment type="function">
    <text evidence="1">Catalyzes the excretion of spermidine.</text>
</comment>
<comment type="subunit">
    <text evidence="1">Forms a complex with MdtI.</text>
</comment>
<comment type="subcellular location">
    <subcellularLocation>
        <location evidence="1">Cell inner membrane</location>
        <topology evidence="1">Multi-pass membrane protein</topology>
    </subcellularLocation>
</comment>
<comment type="similarity">
    <text evidence="1">Belongs to the drug/metabolite transporter (DMT) superfamily. Small multidrug resistance (SMR) (TC 2.A.7.1) family. MdtJ subfamily.</text>
</comment>
<proteinExistence type="inferred from homology"/>
<gene>
    <name evidence="1" type="primary">mdtJ</name>
    <name type="ordered locus">UTI89_C1788</name>
</gene>
<reference key="1">
    <citation type="journal article" date="2006" name="Proc. Natl. Acad. Sci. U.S.A.">
        <title>Identification of genes subject to positive selection in uropathogenic strains of Escherichia coli: a comparative genomics approach.</title>
        <authorList>
            <person name="Chen S.L."/>
            <person name="Hung C.-S."/>
            <person name="Xu J."/>
            <person name="Reigstad C.S."/>
            <person name="Magrini V."/>
            <person name="Sabo A."/>
            <person name="Blasiar D."/>
            <person name="Bieri T."/>
            <person name="Meyer R.R."/>
            <person name="Ozersky P."/>
            <person name="Armstrong J.R."/>
            <person name="Fulton R.S."/>
            <person name="Latreille J.P."/>
            <person name="Spieth J."/>
            <person name="Hooton T.M."/>
            <person name="Mardis E.R."/>
            <person name="Hultgren S.J."/>
            <person name="Gordon J.I."/>
        </authorList>
    </citation>
    <scope>NUCLEOTIDE SEQUENCE [LARGE SCALE GENOMIC DNA]</scope>
    <source>
        <strain>UTI89 / UPEC</strain>
    </source>
</reference>
<dbReference type="EMBL" id="CP000243">
    <property type="protein sequence ID" value="ABE07266.1"/>
    <property type="molecule type" value="Genomic_DNA"/>
</dbReference>
<dbReference type="RefSeq" id="WP_000276149.1">
    <property type="nucleotide sequence ID" value="NZ_CP064825.1"/>
</dbReference>
<dbReference type="SMR" id="Q1RBJ8"/>
<dbReference type="GeneID" id="93775748"/>
<dbReference type="KEGG" id="eci:UTI89_C1788"/>
<dbReference type="HOGENOM" id="CLU_133067_0_0_6"/>
<dbReference type="Proteomes" id="UP000001952">
    <property type="component" value="Chromosome"/>
</dbReference>
<dbReference type="GO" id="GO:0005886">
    <property type="term" value="C:plasma membrane"/>
    <property type="evidence" value="ECO:0007669"/>
    <property type="project" value="UniProtKB-SubCell"/>
</dbReference>
<dbReference type="GO" id="GO:0015199">
    <property type="term" value="F:amino-acid betaine transmembrane transporter activity"/>
    <property type="evidence" value="ECO:0007669"/>
    <property type="project" value="TreeGrafter"/>
</dbReference>
<dbReference type="GO" id="GO:0015297">
    <property type="term" value="F:antiporter activity"/>
    <property type="evidence" value="ECO:0007669"/>
    <property type="project" value="TreeGrafter"/>
</dbReference>
<dbReference type="GO" id="GO:0015220">
    <property type="term" value="F:choline transmembrane transporter activity"/>
    <property type="evidence" value="ECO:0007669"/>
    <property type="project" value="TreeGrafter"/>
</dbReference>
<dbReference type="GO" id="GO:0015606">
    <property type="term" value="F:spermidine transmembrane transporter activity"/>
    <property type="evidence" value="ECO:0007669"/>
    <property type="project" value="UniProtKB-UniRule"/>
</dbReference>
<dbReference type="GO" id="GO:0031460">
    <property type="term" value="P:glycine betaine transport"/>
    <property type="evidence" value="ECO:0007669"/>
    <property type="project" value="TreeGrafter"/>
</dbReference>
<dbReference type="FunFam" id="1.10.3730.20:FF:000001">
    <property type="entry name" value="Quaternary ammonium compound resistance transporter SugE"/>
    <property type="match status" value="1"/>
</dbReference>
<dbReference type="Gene3D" id="1.10.3730.20">
    <property type="match status" value="1"/>
</dbReference>
<dbReference type="HAMAP" id="MF_01598">
    <property type="entry name" value="MdtJ"/>
    <property type="match status" value="1"/>
</dbReference>
<dbReference type="InterPro" id="IPR000390">
    <property type="entry name" value="Small_drug/metabolite_transptr"/>
</dbReference>
<dbReference type="InterPro" id="IPR045324">
    <property type="entry name" value="Small_multidrug_res"/>
</dbReference>
<dbReference type="InterPro" id="IPR023740">
    <property type="entry name" value="Spermidine_export_MdtJ"/>
</dbReference>
<dbReference type="NCBIfam" id="NF007767">
    <property type="entry name" value="PRK10452.1"/>
    <property type="match status" value="1"/>
</dbReference>
<dbReference type="PANTHER" id="PTHR30561">
    <property type="entry name" value="SMR FAMILY PROTON-DEPENDENT DRUG EFFLUX TRANSPORTER SUGE"/>
    <property type="match status" value="1"/>
</dbReference>
<dbReference type="PANTHER" id="PTHR30561:SF2">
    <property type="entry name" value="SPERMIDINE EXPORT PROTEIN MDTJ"/>
    <property type="match status" value="1"/>
</dbReference>
<dbReference type="Pfam" id="PF00893">
    <property type="entry name" value="Multi_Drug_Res"/>
    <property type="match status" value="1"/>
</dbReference>
<dbReference type="SUPFAM" id="SSF103481">
    <property type="entry name" value="Multidrug resistance efflux transporter EmrE"/>
    <property type="match status" value="1"/>
</dbReference>